<accession>Q58359</accession>
<name>Y949_METJA</name>
<reference key="1">
    <citation type="journal article" date="1996" name="Science">
        <title>Complete genome sequence of the methanogenic archaeon, Methanococcus jannaschii.</title>
        <authorList>
            <person name="Bult C.J."/>
            <person name="White O."/>
            <person name="Olsen G.J."/>
            <person name="Zhou L."/>
            <person name="Fleischmann R.D."/>
            <person name="Sutton G.G."/>
            <person name="Blake J.A."/>
            <person name="FitzGerald L.M."/>
            <person name="Clayton R.A."/>
            <person name="Gocayne J.D."/>
            <person name="Kerlavage A.R."/>
            <person name="Dougherty B.A."/>
            <person name="Tomb J.-F."/>
            <person name="Adams M.D."/>
            <person name="Reich C.I."/>
            <person name="Overbeek R."/>
            <person name="Kirkness E.F."/>
            <person name="Weinstock K.G."/>
            <person name="Merrick J.M."/>
            <person name="Glodek A."/>
            <person name="Scott J.L."/>
            <person name="Geoghagen N.S.M."/>
            <person name="Weidman J.F."/>
            <person name="Fuhrmann J.L."/>
            <person name="Nguyen D."/>
            <person name="Utterback T.R."/>
            <person name="Kelley J.M."/>
            <person name="Peterson J.D."/>
            <person name="Sadow P.W."/>
            <person name="Hanna M.C."/>
            <person name="Cotton M.D."/>
            <person name="Roberts K.M."/>
            <person name="Hurst M.A."/>
            <person name="Kaine B.P."/>
            <person name="Borodovsky M."/>
            <person name="Klenk H.-P."/>
            <person name="Fraser C.M."/>
            <person name="Smith H.O."/>
            <person name="Woese C.R."/>
            <person name="Venter J.C."/>
        </authorList>
    </citation>
    <scope>NUCLEOTIDE SEQUENCE [LARGE SCALE GENOMIC DNA]</scope>
    <source>
        <strain>ATCC 43067 / DSM 2661 / JAL-1 / JCM 10045 / NBRC 100440</strain>
    </source>
</reference>
<sequence length="123" mass="13959">MTILLIRGDSYEKLKNALADVDRHAELTIIGKPKIIVPEAADEILSHILGEVKKPCKTACLAKIAEKAPKAIDRIRKIHPPAHIVVISERYGDIYYKLLDDFPKLPVLKGYYKSKKKDKKKKK</sequence>
<keyword id="KW-1185">Reference proteome</keyword>
<protein>
    <recommendedName>
        <fullName>Uncharacterized protein MJ0949</fullName>
    </recommendedName>
</protein>
<feature type="chain" id="PRO_0000107118" description="Uncharacterized protein MJ0949">
    <location>
        <begin position="1"/>
        <end position="123"/>
    </location>
</feature>
<dbReference type="EMBL" id="L77117">
    <property type="protein sequence ID" value="AAB98950.1"/>
    <property type="molecule type" value="Genomic_DNA"/>
</dbReference>
<dbReference type="PIR" id="E64418">
    <property type="entry name" value="E64418"/>
</dbReference>
<dbReference type="RefSeq" id="WP_010870463.1">
    <property type="nucleotide sequence ID" value="NC_000909.1"/>
</dbReference>
<dbReference type="SMR" id="Q58359"/>
<dbReference type="STRING" id="243232.MJ_0949"/>
<dbReference type="PaxDb" id="243232-MJ_0949"/>
<dbReference type="EnsemblBacteria" id="AAB98950">
    <property type="protein sequence ID" value="AAB98950"/>
    <property type="gene ID" value="MJ_0949"/>
</dbReference>
<dbReference type="GeneID" id="1451846"/>
<dbReference type="KEGG" id="mja:MJ_0949"/>
<dbReference type="eggNOG" id="arCOG04842">
    <property type="taxonomic scope" value="Archaea"/>
</dbReference>
<dbReference type="HOGENOM" id="CLU_145818_0_0_2"/>
<dbReference type="InParanoid" id="Q58359"/>
<dbReference type="OrthoDB" id="73585at2157"/>
<dbReference type="PhylomeDB" id="Q58359"/>
<dbReference type="Proteomes" id="UP000000805">
    <property type="component" value="Chromosome"/>
</dbReference>
<dbReference type="GO" id="GO:0016787">
    <property type="term" value="F:hydrolase activity"/>
    <property type="evidence" value="ECO:0007669"/>
    <property type="project" value="InterPro"/>
</dbReference>
<dbReference type="GO" id="GO:0008270">
    <property type="term" value="F:zinc ion binding"/>
    <property type="evidence" value="ECO:0007669"/>
    <property type="project" value="InterPro"/>
</dbReference>
<dbReference type="InterPro" id="IPR016192">
    <property type="entry name" value="APOBEC/CMP_deaminase_Zn-bd"/>
</dbReference>
<dbReference type="InterPro" id="IPR007154">
    <property type="entry name" value="DUF356"/>
</dbReference>
<dbReference type="Pfam" id="PF04009">
    <property type="entry name" value="DUF356"/>
    <property type="match status" value="1"/>
</dbReference>
<dbReference type="PIRSF" id="PIRSF006606">
    <property type="entry name" value="UCP006606"/>
    <property type="match status" value="1"/>
</dbReference>
<organism>
    <name type="scientific">Methanocaldococcus jannaschii (strain ATCC 43067 / DSM 2661 / JAL-1 / JCM 10045 / NBRC 100440)</name>
    <name type="common">Methanococcus jannaschii</name>
    <dbReference type="NCBI Taxonomy" id="243232"/>
    <lineage>
        <taxon>Archaea</taxon>
        <taxon>Methanobacteriati</taxon>
        <taxon>Methanobacteriota</taxon>
        <taxon>Methanomada group</taxon>
        <taxon>Methanococci</taxon>
        <taxon>Methanococcales</taxon>
        <taxon>Methanocaldococcaceae</taxon>
        <taxon>Methanocaldococcus</taxon>
    </lineage>
</organism>
<gene>
    <name type="ordered locus">MJ0949</name>
</gene>
<proteinExistence type="predicted"/>